<protein>
    <recommendedName>
        <fullName evidence="1">Queuine tRNA-ribosyltransferase</fullName>
        <ecNumber evidence="1">2.4.2.29</ecNumber>
    </recommendedName>
    <alternativeName>
        <fullName evidence="1">Guanine insertion enzyme</fullName>
    </alternativeName>
    <alternativeName>
        <fullName evidence="1">tRNA-guanine transglycosylase</fullName>
    </alternativeName>
</protein>
<organism>
    <name type="scientific">Thermotoga neapolitana (strain ATCC 49049 / DSM 4359 / NBRC 107923 / NS-E)</name>
    <dbReference type="NCBI Taxonomy" id="309803"/>
    <lineage>
        <taxon>Bacteria</taxon>
        <taxon>Thermotogati</taxon>
        <taxon>Thermotogota</taxon>
        <taxon>Thermotogae</taxon>
        <taxon>Thermotogales</taxon>
        <taxon>Thermotogaceae</taxon>
        <taxon>Thermotoga</taxon>
    </lineage>
</organism>
<feature type="chain" id="PRO_1000198034" description="Queuine tRNA-ribosyltransferase">
    <location>
        <begin position="1"/>
        <end position="369"/>
    </location>
</feature>
<feature type="region of interest" description="RNA binding" evidence="1">
    <location>
        <begin position="242"/>
        <end position="248"/>
    </location>
</feature>
<feature type="region of interest" description="RNA binding; important for wobble base 34 recognition" evidence="1">
    <location>
        <begin position="266"/>
        <end position="270"/>
    </location>
</feature>
<feature type="active site" description="Proton acceptor" evidence="1">
    <location>
        <position position="89"/>
    </location>
</feature>
<feature type="active site" description="Nucleophile" evidence="1">
    <location>
        <position position="261"/>
    </location>
</feature>
<feature type="binding site" evidence="1">
    <location>
        <begin position="89"/>
        <end position="93"/>
    </location>
    <ligand>
        <name>substrate</name>
    </ligand>
</feature>
<feature type="binding site" evidence="1">
    <location>
        <position position="142"/>
    </location>
    <ligand>
        <name>substrate</name>
    </ligand>
</feature>
<feature type="binding site" evidence="1">
    <location>
        <position position="184"/>
    </location>
    <ligand>
        <name>substrate</name>
    </ligand>
</feature>
<feature type="binding site" evidence="1">
    <location>
        <position position="211"/>
    </location>
    <ligand>
        <name>substrate</name>
    </ligand>
</feature>
<feature type="binding site" evidence="1">
    <location>
        <position position="299"/>
    </location>
    <ligand>
        <name>Zn(2+)</name>
        <dbReference type="ChEBI" id="CHEBI:29105"/>
    </ligand>
</feature>
<feature type="binding site" evidence="1">
    <location>
        <position position="301"/>
    </location>
    <ligand>
        <name>Zn(2+)</name>
        <dbReference type="ChEBI" id="CHEBI:29105"/>
    </ligand>
</feature>
<feature type="binding site" evidence="1">
    <location>
        <position position="304"/>
    </location>
    <ligand>
        <name>Zn(2+)</name>
        <dbReference type="ChEBI" id="CHEBI:29105"/>
    </ligand>
</feature>
<feature type="binding site" evidence="1">
    <location>
        <position position="330"/>
    </location>
    <ligand>
        <name>Zn(2+)</name>
        <dbReference type="ChEBI" id="CHEBI:29105"/>
    </ligand>
</feature>
<accession>B9K8N7</accession>
<reference key="1">
    <citation type="submission" date="2007-11" db="EMBL/GenBank/DDBJ databases">
        <title>The genome sequence of the hyperthermophilic bacterium Thermotoga neapolitana.</title>
        <authorList>
            <person name="Lim S.K."/>
            <person name="Kim J.S."/>
            <person name="Cha S.H."/>
            <person name="Park B.C."/>
            <person name="Lee D.S."/>
            <person name="Tae H.S."/>
            <person name="Kim S.-J."/>
            <person name="Kim J.J."/>
            <person name="Park K.J."/>
            <person name="Lee S.Y."/>
        </authorList>
    </citation>
    <scope>NUCLEOTIDE SEQUENCE [LARGE SCALE GENOMIC DNA]</scope>
    <source>
        <strain>ATCC 49049 / DSM 4359 / NBRC 107923 / NS-E</strain>
    </source>
</reference>
<keyword id="KW-0328">Glycosyltransferase</keyword>
<keyword id="KW-0479">Metal-binding</keyword>
<keyword id="KW-0671">Queuosine biosynthesis</keyword>
<keyword id="KW-0808">Transferase</keyword>
<keyword id="KW-0819">tRNA processing</keyword>
<keyword id="KW-0862">Zinc</keyword>
<sequence length="369" mass="41194">MEFEVKKTSGKARVGVLKLPHGVVRTPVFMPVGTNANVKLLTPRDLEEAGAEIVLSNTFHLMLKPGVEIIRLHGGLHKFMGWKKPILTDSGGFQVFSLPKLKIDDEGVTFKSPIDGSKVFLSPEISMEVQIALGSDICMAFDHCPPPDADYEVVKEATERTYRWALRSKEAFKTENQVLFGIVQGGVYPDLRKKSALQITSIGFDGYAIGGLSIGEERSLTLEMTEITVEYLPEDRPRYFMGGGSPELILELVDRGVDMFDSVFPTRIARHGTALTWKGRLNLKASYNKRSLDPVDEQCGCYTCKNFTRSYIHHLIDRGEVLGQILLSLHNVSFMISFMDEVRRSIEEGTFREFKGKMIDVYSSGGVSV</sequence>
<name>TGT_THENN</name>
<proteinExistence type="inferred from homology"/>
<comment type="function">
    <text evidence="1">Catalyzes the base-exchange of a guanine (G) residue with the queuine precursor 7-aminomethyl-7-deazaguanine (PreQ1) at position 34 (anticodon wobble position) in tRNAs with GU(N) anticodons (tRNA-Asp, -Asn, -His and -Tyr). Catalysis occurs through a double-displacement mechanism. The nucleophile active site attacks the C1' of nucleotide 34 to detach the guanine base from the RNA, forming a covalent enzyme-RNA intermediate. The proton acceptor active site deprotonates the incoming PreQ1, allowing a nucleophilic attack on the C1' of the ribose to form the product. After dissociation, two additional enzymatic reactions on the tRNA convert PreQ1 to queuine (Q), resulting in the hypermodified nucleoside queuosine (7-(((4,5-cis-dihydroxy-2-cyclopenten-1-yl)amino)methyl)-7-deazaguanosine).</text>
</comment>
<comment type="catalytic activity">
    <reaction evidence="1">
        <text>7-aminomethyl-7-carbaguanine + guanosine(34) in tRNA = 7-aminomethyl-7-carbaguanosine(34) in tRNA + guanine</text>
        <dbReference type="Rhea" id="RHEA:24104"/>
        <dbReference type="Rhea" id="RHEA-COMP:10341"/>
        <dbReference type="Rhea" id="RHEA-COMP:10342"/>
        <dbReference type="ChEBI" id="CHEBI:16235"/>
        <dbReference type="ChEBI" id="CHEBI:58703"/>
        <dbReference type="ChEBI" id="CHEBI:74269"/>
        <dbReference type="ChEBI" id="CHEBI:82833"/>
        <dbReference type="EC" id="2.4.2.29"/>
    </reaction>
</comment>
<comment type="cofactor">
    <cofactor evidence="1">
        <name>Zn(2+)</name>
        <dbReference type="ChEBI" id="CHEBI:29105"/>
    </cofactor>
    <text evidence="1">Binds 1 zinc ion per subunit.</text>
</comment>
<comment type="pathway">
    <text evidence="1">tRNA modification; tRNA-queuosine biosynthesis.</text>
</comment>
<comment type="subunit">
    <text evidence="1">Homodimer. Within each dimer, one monomer is responsible for RNA recognition and catalysis, while the other monomer binds to the replacement base PreQ1.</text>
</comment>
<comment type="similarity">
    <text evidence="1">Belongs to the queuine tRNA-ribosyltransferase family.</text>
</comment>
<gene>
    <name evidence="1" type="primary">tgt</name>
    <name type="ordered locus">CTN_1144</name>
</gene>
<evidence type="ECO:0000255" key="1">
    <source>
        <dbReference type="HAMAP-Rule" id="MF_00168"/>
    </source>
</evidence>
<dbReference type="EC" id="2.4.2.29" evidence="1"/>
<dbReference type="EMBL" id="CP000916">
    <property type="protein sequence ID" value="ACM23320.1"/>
    <property type="molecule type" value="Genomic_DNA"/>
</dbReference>
<dbReference type="RefSeq" id="WP_015919635.1">
    <property type="nucleotide sequence ID" value="NC_011978.1"/>
</dbReference>
<dbReference type="SMR" id="B9K8N7"/>
<dbReference type="STRING" id="309803.CTN_1144"/>
<dbReference type="KEGG" id="tna:CTN_1144"/>
<dbReference type="eggNOG" id="COG0343">
    <property type="taxonomic scope" value="Bacteria"/>
</dbReference>
<dbReference type="HOGENOM" id="CLU_022060_0_1_0"/>
<dbReference type="UniPathway" id="UPA00392"/>
<dbReference type="Proteomes" id="UP000000445">
    <property type="component" value="Chromosome"/>
</dbReference>
<dbReference type="GO" id="GO:0005829">
    <property type="term" value="C:cytosol"/>
    <property type="evidence" value="ECO:0007669"/>
    <property type="project" value="TreeGrafter"/>
</dbReference>
<dbReference type="GO" id="GO:0046872">
    <property type="term" value="F:metal ion binding"/>
    <property type="evidence" value="ECO:0007669"/>
    <property type="project" value="UniProtKB-KW"/>
</dbReference>
<dbReference type="GO" id="GO:0008479">
    <property type="term" value="F:tRNA-guanosine(34) queuine transglycosylase activity"/>
    <property type="evidence" value="ECO:0007669"/>
    <property type="project" value="UniProtKB-UniRule"/>
</dbReference>
<dbReference type="GO" id="GO:0008616">
    <property type="term" value="P:queuosine biosynthetic process"/>
    <property type="evidence" value="ECO:0007669"/>
    <property type="project" value="UniProtKB-UniRule"/>
</dbReference>
<dbReference type="GO" id="GO:0002099">
    <property type="term" value="P:tRNA wobble guanine modification"/>
    <property type="evidence" value="ECO:0007669"/>
    <property type="project" value="TreeGrafter"/>
</dbReference>
<dbReference type="GO" id="GO:0101030">
    <property type="term" value="P:tRNA-guanine transglycosylation"/>
    <property type="evidence" value="ECO:0007669"/>
    <property type="project" value="InterPro"/>
</dbReference>
<dbReference type="FunFam" id="3.20.20.105:FF:000001">
    <property type="entry name" value="Queuine tRNA-ribosyltransferase"/>
    <property type="match status" value="1"/>
</dbReference>
<dbReference type="Gene3D" id="3.20.20.105">
    <property type="entry name" value="Queuine tRNA-ribosyltransferase-like"/>
    <property type="match status" value="1"/>
</dbReference>
<dbReference type="HAMAP" id="MF_00168">
    <property type="entry name" value="Q_tRNA_Tgt"/>
    <property type="match status" value="1"/>
</dbReference>
<dbReference type="InterPro" id="IPR050076">
    <property type="entry name" value="ArchSynthase1/Queuine_TRR"/>
</dbReference>
<dbReference type="InterPro" id="IPR004803">
    <property type="entry name" value="TGT"/>
</dbReference>
<dbReference type="InterPro" id="IPR036511">
    <property type="entry name" value="TGT-like_sf"/>
</dbReference>
<dbReference type="InterPro" id="IPR002616">
    <property type="entry name" value="tRNA_ribo_trans-like"/>
</dbReference>
<dbReference type="NCBIfam" id="TIGR00430">
    <property type="entry name" value="Q_tRNA_tgt"/>
    <property type="match status" value="1"/>
</dbReference>
<dbReference type="NCBIfam" id="TIGR00449">
    <property type="entry name" value="tgt_general"/>
    <property type="match status" value="1"/>
</dbReference>
<dbReference type="PANTHER" id="PTHR46499">
    <property type="entry name" value="QUEUINE TRNA-RIBOSYLTRANSFERASE"/>
    <property type="match status" value="1"/>
</dbReference>
<dbReference type="PANTHER" id="PTHR46499:SF1">
    <property type="entry name" value="QUEUINE TRNA-RIBOSYLTRANSFERASE"/>
    <property type="match status" value="1"/>
</dbReference>
<dbReference type="Pfam" id="PF01702">
    <property type="entry name" value="TGT"/>
    <property type="match status" value="1"/>
</dbReference>
<dbReference type="SUPFAM" id="SSF51713">
    <property type="entry name" value="tRNA-guanine transglycosylase"/>
    <property type="match status" value="1"/>
</dbReference>